<feature type="chain" id="PRO_0000037289" description="Putative 2'-O-methyl transferase" evidence="1">
    <location>
        <begin position="1" status="less than"/>
        <end position="168"/>
    </location>
</feature>
<feature type="domain" description="Nidovirus-type SAM-dependent 2'-O-MTase" evidence="2">
    <location>
        <begin position="1" status="less than"/>
        <end position="165"/>
    </location>
</feature>
<feature type="non-terminal residue">
    <location>
        <position position="1"/>
    </location>
</feature>
<dbReference type="EC" id="2.1.1.-"/>
<dbReference type="EMBL" id="D13096">
    <property type="protein sequence ID" value="BAA02407.1"/>
    <property type="molecule type" value="Genomic_RNA"/>
</dbReference>
<dbReference type="PIR" id="PQ0481">
    <property type="entry name" value="PQ0481"/>
</dbReference>
<dbReference type="SMR" id="P36697"/>
<dbReference type="GO" id="GO:0004483">
    <property type="term" value="F:mRNA (nucleoside-2'-O-)-methyltransferase activity"/>
    <property type="evidence" value="ECO:0007669"/>
    <property type="project" value="InterPro"/>
</dbReference>
<dbReference type="GO" id="GO:0032259">
    <property type="term" value="P:methylation"/>
    <property type="evidence" value="ECO:0007669"/>
    <property type="project" value="UniProtKB-KW"/>
</dbReference>
<dbReference type="GO" id="GO:0075523">
    <property type="term" value="P:viral translational frameshifting"/>
    <property type="evidence" value="ECO:0007669"/>
    <property type="project" value="UniProtKB-KW"/>
</dbReference>
<dbReference type="Gene3D" id="3.40.50.150">
    <property type="entry name" value="Vaccinia Virus protein VP39"/>
    <property type="match status" value="1"/>
</dbReference>
<dbReference type="InterPro" id="IPR046438">
    <property type="entry name" value="NIV_2_O_MTASE"/>
</dbReference>
<dbReference type="InterPro" id="IPR009461">
    <property type="entry name" value="NSP16_CoV-like"/>
</dbReference>
<dbReference type="InterPro" id="IPR029063">
    <property type="entry name" value="SAM-dependent_MTases_sf"/>
</dbReference>
<dbReference type="Pfam" id="PF06460">
    <property type="entry name" value="CoV_Methyltr_2"/>
    <property type="match status" value="1"/>
</dbReference>
<dbReference type="PROSITE" id="PS51955">
    <property type="entry name" value="NIV_2_O_MTASE"/>
    <property type="match status" value="1"/>
</dbReference>
<organism>
    <name type="scientific">Canine coronavirus (strain Insavc-1)</name>
    <name type="common">CCoV</name>
    <name type="synonym">Canine enteric coronavirus</name>
    <dbReference type="NCBI Taxonomy" id="36391"/>
    <lineage>
        <taxon>Viruses</taxon>
        <taxon>Riboviria</taxon>
        <taxon>Orthornavirae</taxon>
        <taxon>Pisuviricota</taxon>
        <taxon>Pisoniviricetes</taxon>
        <taxon>Nidovirales</taxon>
        <taxon>Cornidovirineae</taxon>
        <taxon>Coronaviridae</taxon>
        <taxon>Orthocoronavirinae</taxon>
        <taxon>Alphacoronavirus</taxon>
        <taxon>Tegacovirus</taxon>
        <taxon>Alphacoronavirus 1</taxon>
    </lineage>
</organism>
<accession>P36697</accession>
<proteinExistence type="predicted"/>
<comment type="function">
    <text>The replicase polyprotein of coronaviruses is a multifunctional protein: it contains the activities necessary for the transcription of negative stranded RNA, leader RNA, subgenomic mRNAs and progeny virion RNA as well as proteinases responsible for the cleavage of the polyprotein into functional products.</text>
</comment>
<comment type="alternative products">
    <event type="ribosomal frameshifting"/>
    <isoform>
        <id>P36697-1</id>
        <name>Replicase polyprotein 1ab</name>
        <name>pp1ab</name>
        <sequence type="displayed"/>
    </isoform>
    <isoform>
        <id>P36697-2</id>
        <name>Replicase polyprotein 1a</name>
        <name>pp1a</name>
        <name>ORF1a polyprotein</name>
        <sequence type="not described"/>
    </isoform>
</comment>
<comment type="miscellaneous">
    <molecule>Isoform Replicase polyprotein 1ab</molecule>
    <text>Produced by -1 ribosomal frameshifting at the 1a-1b genes boundary.</text>
</comment>
<comment type="miscellaneous">
    <molecule>Isoform Replicase polyprotein 1a</molecule>
    <text evidence="3">Produced by conventional translation.</text>
</comment>
<keyword id="KW-0489">Methyltransferase</keyword>
<keyword id="KW-0688">Ribosomal frameshifting</keyword>
<keyword id="KW-0808">Transferase</keyword>
<organismHost>
    <name type="scientific">Canis lupus familiaris</name>
    <name type="common">Dog</name>
    <name type="synonym">Canis familiaris</name>
    <dbReference type="NCBI Taxonomy" id="9615"/>
</organismHost>
<protein>
    <recommendedName>
        <fullName>Replicase polyprotein 1ab</fullName>
        <shortName>pp1ab</shortName>
    </recommendedName>
    <alternativeName>
        <fullName>ORF1ab polyprotein</fullName>
    </alternativeName>
    <component>
        <recommendedName>
            <fullName>Putative 2'-O-methyl transferase</fullName>
            <ecNumber>2.1.1.-</ecNumber>
        </recommendedName>
        <alternativeName>
            <fullName>nsp16</fullName>
        </alternativeName>
    </component>
</protein>
<sequence>PNTKSIDGENTSKDGFFTYVNGFIKEKLSLGGSAAIKITEFSWNKDLYELIQRFEYWTVFCTSVNTSSSEGFLIGVNYLGPYCDRAIVDGNIMHANYIFWRNSTIMALSHNSVLDTPKFKCRCNNALIVNLKEKELNEMVIGLLKKGKLLIRNNGKLLNFGNHLVNVP</sequence>
<reference key="1">
    <citation type="journal article" date="1992" name="J. Gen. Virol.">
        <title>Analysis of a 9.6 kb sequence from the 3' end of canine coronavirus genomic RNA.</title>
        <authorList>
            <person name="Horsburgh B.C."/>
            <person name="Brierley I."/>
            <person name="Brown T.D.K."/>
        </authorList>
    </citation>
    <scope>NUCLEOTIDE SEQUENCE [GENOMIC RNA]</scope>
</reference>
<gene>
    <name type="primary">rep</name>
    <name type="ORF">1a-1b</name>
</gene>
<evidence type="ECO:0000250" key="1"/>
<evidence type="ECO:0000255" key="2">
    <source>
        <dbReference type="PROSITE-ProRule" id="PRU01300"/>
    </source>
</evidence>
<evidence type="ECO:0000305" key="3"/>
<name>R1AB_CVCAI</name>